<sequence length="175" mass="18783">MSIDDLKSKIPDFAKDVRLNLSSMASDETLTPQQKYGLFVACGIASRNADVRKALVAEAAGKVDASVIQAAKAAASIMGMNNVYYRFVHLASNKDYRTMPARLRMNVISNPGVDKIDFELWSLAVSAINGCGMCIDAHEDVLRKANVTAEAIQAAVRFASIIQSAAIALEAADTE</sequence>
<feature type="chain" id="PRO_0000359477" description="Alkyl hydroperoxide reductase AhpD">
    <location>
        <begin position="1"/>
        <end position="175"/>
    </location>
</feature>
<feature type="active site" description="Proton donor" evidence="2">
    <location>
        <position position="131"/>
    </location>
</feature>
<feature type="active site" description="Cysteine sulfenic acid (-SOH) intermediate" evidence="2">
    <location>
        <position position="134"/>
    </location>
</feature>
<feature type="disulfide bond" evidence="1">
    <location>
        <begin position="131"/>
        <end position="134"/>
    </location>
</feature>
<feature type="disulfide bond" description="Interchain (with AhpC); in linked form" evidence="2">
    <location>
        <position position="134"/>
    </location>
</feature>
<comment type="function">
    <text evidence="2">Antioxidant protein with alkyl hydroperoxidase activity. Required for the reduction of the AhpC active site cysteine residues and for the regeneration of the AhpC enzyme activity.</text>
</comment>
<comment type="catalytic activity">
    <reaction evidence="2">
        <text>N(6)-[(R)-dihydrolipoyl]-L-lysyl-[lipoyl-carrier protein] + a hydroperoxide = N(6)-[(R)-lipoyl]-L-lysyl-[lipoyl-carrier protein] + an alcohol + H2O</text>
        <dbReference type="Rhea" id="RHEA:62636"/>
        <dbReference type="Rhea" id="RHEA-COMP:10502"/>
        <dbReference type="Rhea" id="RHEA-COMP:16355"/>
        <dbReference type="ChEBI" id="CHEBI:15377"/>
        <dbReference type="ChEBI" id="CHEBI:30879"/>
        <dbReference type="ChEBI" id="CHEBI:35924"/>
        <dbReference type="ChEBI" id="CHEBI:83099"/>
        <dbReference type="ChEBI" id="CHEBI:83100"/>
        <dbReference type="EC" id="1.11.1.28"/>
    </reaction>
</comment>
<comment type="similarity">
    <text evidence="2">Belongs to the AhpD family.</text>
</comment>
<keyword id="KW-0049">Antioxidant</keyword>
<keyword id="KW-1015">Disulfide bond</keyword>
<keyword id="KW-0560">Oxidoreductase</keyword>
<keyword id="KW-0575">Peroxidase</keyword>
<keyword id="KW-0676">Redox-active center</keyword>
<keyword id="KW-1185">Reference proteome</keyword>
<gene>
    <name evidence="2" type="primary">ahpD</name>
    <name type="ordered locus">BAB2_0532</name>
</gene>
<evidence type="ECO:0000250" key="1"/>
<evidence type="ECO:0000255" key="2">
    <source>
        <dbReference type="HAMAP-Rule" id="MF_01676"/>
    </source>
</evidence>
<dbReference type="EC" id="1.11.1.28" evidence="2"/>
<dbReference type="EMBL" id="AM040265">
    <property type="protein sequence ID" value="CAJ12698.1"/>
    <property type="molecule type" value="Genomic_DNA"/>
</dbReference>
<dbReference type="RefSeq" id="WP_002965934.1">
    <property type="nucleotide sequence ID" value="NZ_KN046823.1"/>
</dbReference>
<dbReference type="SMR" id="Q2YKW2"/>
<dbReference type="STRING" id="359391.BAB2_0532"/>
<dbReference type="PeroxiBase" id="7298">
    <property type="entry name" value="BabAhpD_2308"/>
</dbReference>
<dbReference type="KEGG" id="bmf:BAB2_0532"/>
<dbReference type="PATRIC" id="fig|359391.11.peg.2721"/>
<dbReference type="HOGENOM" id="CLU_105328_0_0_5"/>
<dbReference type="PhylomeDB" id="Q2YKW2"/>
<dbReference type="Proteomes" id="UP000002719">
    <property type="component" value="Chromosome II"/>
</dbReference>
<dbReference type="GO" id="GO:0008785">
    <property type="term" value="F:alkyl hydroperoxide reductase activity"/>
    <property type="evidence" value="ECO:0007669"/>
    <property type="project" value="UniProtKB-UniRule"/>
</dbReference>
<dbReference type="GO" id="GO:0015036">
    <property type="term" value="F:disulfide oxidoreductase activity"/>
    <property type="evidence" value="ECO:0007669"/>
    <property type="project" value="TreeGrafter"/>
</dbReference>
<dbReference type="GO" id="GO:0032843">
    <property type="term" value="F:hydroperoxide reductase activity"/>
    <property type="evidence" value="ECO:0007669"/>
    <property type="project" value="InterPro"/>
</dbReference>
<dbReference type="GO" id="GO:0051920">
    <property type="term" value="F:peroxiredoxin activity"/>
    <property type="evidence" value="ECO:0007669"/>
    <property type="project" value="InterPro"/>
</dbReference>
<dbReference type="GO" id="GO:0045454">
    <property type="term" value="P:cell redox homeostasis"/>
    <property type="evidence" value="ECO:0007669"/>
    <property type="project" value="TreeGrafter"/>
</dbReference>
<dbReference type="GO" id="GO:0006979">
    <property type="term" value="P:response to oxidative stress"/>
    <property type="evidence" value="ECO:0007669"/>
    <property type="project" value="InterPro"/>
</dbReference>
<dbReference type="Gene3D" id="1.20.1290.10">
    <property type="entry name" value="AhpD-like"/>
    <property type="match status" value="1"/>
</dbReference>
<dbReference type="HAMAP" id="MF_01676">
    <property type="entry name" value="AhpD"/>
    <property type="match status" value="1"/>
</dbReference>
<dbReference type="InterPro" id="IPR004674">
    <property type="entry name" value="AhpD"/>
</dbReference>
<dbReference type="InterPro" id="IPR029032">
    <property type="entry name" value="AhpD-like"/>
</dbReference>
<dbReference type="InterPro" id="IPR004675">
    <property type="entry name" value="AhpD_core"/>
</dbReference>
<dbReference type="InterPro" id="IPR003779">
    <property type="entry name" value="CMD-like"/>
</dbReference>
<dbReference type="NCBIfam" id="TIGR00777">
    <property type="entry name" value="ahpD"/>
    <property type="match status" value="1"/>
</dbReference>
<dbReference type="NCBIfam" id="TIGR00778">
    <property type="entry name" value="ahpD_dom"/>
    <property type="match status" value="1"/>
</dbReference>
<dbReference type="PANTHER" id="PTHR33930">
    <property type="entry name" value="ALKYL HYDROPEROXIDE REDUCTASE AHPD"/>
    <property type="match status" value="1"/>
</dbReference>
<dbReference type="PANTHER" id="PTHR33930:SF7">
    <property type="entry name" value="ALKYL HYDROPEROXIDE REDUCTASE AHPD"/>
    <property type="match status" value="1"/>
</dbReference>
<dbReference type="Pfam" id="PF02627">
    <property type="entry name" value="CMD"/>
    <property type="match status" value="1"/>
</dbReference>
<dbReference type="SUPFAM" id="SSF69118">
    <property type="entry name" value="AhpD-like"/>
    <property type="match status" value="1"/>
</dbReference>
<name>AHPD_BRUA2</name>
<protein>
    <recommendedName>
        <fullName evidence="2">Alkyl hydroperoxide reductase AhpD</fullName>
        <ecNumber evidence="2">1.11.1.28</ecNumber>
    </recommendedName>
    <alternativeName>
        <fullName evidence="2">Alkylhydroperoxidase AhpD</fullName>
    </alternativeName>
</protein>
<accession>Q2YKW2</accession>
<organism>
    <name type="scientific">Brucella abortus (strain 2308)</name>
    <dbReference type="NCBI Taxonomy" id="359391"/>
    <lineage>
        <taxon>Bacteria</taxon>
        <taxon>Pseudomonadati</taxon>
        <taxon>Pseudomonadota</taxon>
        <taxon>Alphaproteobacteria</taxon>
        <taxon>Hyphomicrobiales</taxon>
        <taxon>Brucellaceae</taxon>
        <taxon>Brucella/Ochrobactrum group</taxon>
        <taxon>Brucella</taxon>
    </lineage>
</organism>
<proteinExistence type="inferred from homology"/>
<reference key="1">
    <citation type="journal article" date="2005" name="Infect. Immun.">
        <title>Whole-genome analyses of speciation events in pathogenic Brucellae.</title>
        <authorList>
            <person name="Chain P.S."/>
            <person name="Comerci D.J."/>
            <person name="Tolmasky M.E."/>
            <person name="Larimer F.W."/>
            <person name="Malfatti S.A."/>
            <person name="Vergez L.M."/>
            <person name="Aguero F."/>
            <person name="Land M.L."/>
            <person name="Ugalde R.A."/>
            <person name="Garcia E."/>
        </authorList>
    </citation>
    <scope>NUCLEOTIDE SEQUENCE [LARGE SCALE GENOMIC DNA]</scope>
    <source>
        <strain>2308</strain>
    </source>
</reference>